<protein>
    <recommendedName>
        <fullName evidence="1">Phenylalanine--tRNA ligase beta subunit</fullName>
        <ecNumber evidence="1">6.1.1.20</ecNumber>
    </recommendedName>
    <alternativeName>
        <fullName evidence="1">Phenylalanyl-tRNA synthetase beta subunit</fullName>
        <shortName evidence="1">PheRS</shortName>
    </alternativeName>
</protein>
<dbReference type="EC" id="6.1.1.20" evidence="1"/>
<dbReference type="EMBL" id="BA000037">
    <property type="protein sequence ID" value="BAC94734.1"/>
    <property type="molecule type" value="Genomic_DNA"/>
</dbReference>
<dbReference type="RefSeq" id="WP_011150520.1">
    <property type="nucleotide sequence ID" value="NC_005139.1"/>
</dbReference>
<dbReference type="SMR" id="Q7MK40"/>
<dbReference type="STRING" id="672.VV93_v1c17320"/>
<dbReference type="KEGG" id="vvy:VV1970"/>
<dbReference type="PATRIC" id="fig|196600.6.peg.1998"/>
<dbReference type="eggNOG" id="COG0072">
    <property type="taxonomic scope" value="Bacteria"/>
</dbReference>
<dbReference type="eggNOG" id="COG0073">
    <property type="taxonomic scope" value="Bacteria"/>
</dbReference>
<dbReference type="HOGENOM" id="CLU_016891_0_0_6"/>
<dbReference type="Proteomes" id="UP000002675">
    <property type="component" value="Chromosome I"/>
</dbReference>
<dbReference type="GO" id="GO:0009328">
    <property type="term" value="C:phenylalanine-tRNA ligase complex"/>
    <property type="evidence" value="ECO:0007669"/>
    <property type="project" value="TreeGrafter"/>
</dbReference>
<dbReference type="GO" id="GO:0005524">
    <property type="term" value="F:ATP binding"/>
    <property type="evidence" value="ECO:0007669"/>
    <property type="project" value="UniProtKB-UniRule"/>
</dbReference>
<dbReference type="GO" id="GO:0000287">
    <property type="term" value="F:magnesium ion binding"/>
    <property type="evidence" value="ECO:0007669"/>
    <property type="project" value="UniProtKB-UniRule"/>
</dbReference>
<dbReference type="GO" id="GO:0004826">
    <property type="term" value="F:phenylalanine-tRNA ligase activity"/>
    <property type="evidence" value="ECO:0007669"/>
    <property type="project" value="UniProtKB-UniRule"/>
</dbReference>
<dbReference type="GO" id="GO:0000049">
    <property type="term" value="F:tRNA binding"/>
    <property type="evidence" value="ECO:0007669"/>
    <property type="project" value="UniProtKB-KW"/>
</dbReference>
<dbReference type="GO" id="GO:0006432">
    <property type="term" value="P:phenylalanyl-tRNA aminoacylation"/>
    <property type="evidence" value="ECO:0007669"/>
    <property type="project" value="UniProtKB-UniRule"/>
</dbReference>
<dbReference type="CDD" id="cd00769">
    <property type="entry name" value="PheRS_beta_core"/>
    <property type="match status" value="1"/>
</dbReference>
<dbReference type="CDD" id="cd02796">
    <property type="entry name" value="tRNA_bind_bactPheRS"/>
    <property type="match status" value="1"/>
</dbReference>
<dbReference type="FunFam" id="2.40.50.140:FF:000045">
    <property type="entry name" value="Phenylalanine--tRNA ligase beta subunit"/>
    <property type="match status" value="1"/>
</dbReference>
<dbReference type="FunFam" id="3.30.56.10:FF:000002">
    <property type="entry name" value="Phenylalanine--tRNA ligase beta subunit"/>
    <property type="match status" value="1"/>
</dbReference>
<dbReference type="FunFam" id="3.30.70.380:FF:000001">
    <property type="entry name" value="Phenylalanine--tRNA ligase beta subunit"/>
    <property type="match status" value="1"/>
</dbReference>
<dbReference type="FunFam" id="3.30.930.10:FF:000022">
    <property type="entry name" value="Phenylalanine--tRNA ligase beta subunit"/>
    <property type="match status" value="1"/>
</dbReference>
<dbReference type="FunFam" id="3.50.40.10:FF:000001">
    <property type="entry name" value="Phenylalanine--tRNA ligase beta subunit"/>
    <property type="match status" value="1"/>
</dbReference>
<dbReference type="Gene3D" id="3.30.56.10">
    <property type="match status" value="2"/>
</dbReference>
<dbReference type="Gene3D" id="3.30.930.10">
    <property type="entry name" value="Bira Bifunctional Protein, Domain 2"/>
    <property type="match status" value="1"/>
</dbReference>
<dbReference type="Gene3D" id="3.30.70.380">
    <property type="entry name" value="Ferrodoxin-fold anticodon-binding domain"/>
    <property type="match status" value="1"/>
</dbReference>
<dbReference type="Gene3D" id="2.40.50.140">
    <property type="entry name" value="Nucleic acid-binding proteins"/>
    <property type="match status" value="1"/>
</dbReference>
<dbReference type="Gene3D" id="3.50.40.10">
    <property type="entry name" value="Phenylalanyl-trna Synthetase, Chain B, domain 3"/>
    <property type="match status" value="1"/>
</dbReference>
<dbReference type="HAMAP" id="MF_00283">
    <property type="entry name" value="Phe_tRNA_synth_beta1"/>
    <property type="match status" value="1"/>
</dbReference>
<dbReference type="InterPro" id="IPR045864">
    <property type="entry name" value="aa-tRNA-synth_II/BPL/LPL"/>
</dbReference>
<dbReference type="InterPro" id="IPR005146">
    <property type="entry name" value="B3/B4_tRNA-bd"/>
</dbReference>
<dbReference type="InterPro" id="IPR009061">
    <property type="entry name" value="DNA-bd_dom_put_sf"/>
</dbReference>
<dbReference type="InterPro" id="IPR005121">
    <property type="entry name" value="Fdx_antiC-bd"/>
</dbReference>
<dbReference type="InterPro" id="IPR036690">
    <property type="entry name" value="Fdx_antiC-bd_sf"/>
</dbReference>
<dbReference type="InterPro" id="IPR012340">
    <property type="entry name" value="NA-bd_OB-fold"/>
</dbReference>
<dbReference type="InterPro" id="IPR045060">
    <property type="entry name" value="Phe-tRNA-ligase_IIc_bsu"/>
</dbReference>
<dbReference type="InterPro" id="IPR004532">
    <property type="entry name" value="Phe-tRNA-ligase_IIc_bsu_bact"/>
</dbReference>
<dbReference type="InterPro" id="IPR020825">
    <property type="entry name" value="Phe-tRNA_synthase-like_B3/B4"/>
</dbReference>
<dbReference type="InterPro" id="IPR041616">
    <property type="entry name" value="PheRS_beta_core"/>
</dbReference>
<dbReference type="InterPro" id="IPR002547">
    <property type="entry name" value="tRNA-bd_dom"/>
</dbReference>
<dbReference type="InterPro" id="IPR033714">
    <property type="entry name" value="tRNA_bind_bactPheRS"/>
</dbReference>
<dbReference type="InterPro" id="IPR005147">
    <property type="entry name" value="tRNA_synthase_B5-dom"/>
</dbReference>
<dbReference type="NCBIfam" id="TIGR00472">
    <property type="entry name" value="pheT_bact"/>
    <property type="match status" value="1"/>
</dbReference>
<dbReference type="NCBIfam" id="NF045760">
    <property type="entry name" value="YtpR"/>
    <property type="match status" value="1"/>
</dbReference>
<dbReference type="PANTHER" id="PTHR10947:SF0">
    <property type="entry name" value="PHENYLALANINE--TRNA LIGASE BETA SUBUNIT"/>
    <property type="match status" value="1"/>
</dbReference>
<dbReference type="PANTHER" id="PTHR10947">
    <property type="entry name" value="PHENYLALANYL-TRNA SYNTHETASE BETA CHAIN AND LEUCINE-RICH REPEAT-CONTAINING PROTEIN 47"/>
    <property type="match status" value="1"/>
</dbReference>
<dbReference type="Pfam" id="PF03483">
    <property type="entry name" value="B3_4"/>
    <property type="match status" value="1"/>
</dbReference>
<dbReference type="Pfam" id="PF03484">
    <property type="entry name" value="B5"/>
    <property type="match status" value="1"/>
</dbReference>
<dbReference type="Pfam" id="PF03147">
    <property type="entry name" value="FDX-ACB"/>
    <property type="match status" value="1"/>
</dbReference>
<dbReference type="Pfam" id="PF01588">
    <property type="entry name" value="tRNA_bind"/>
    <property type="match status" value="1"/>
</dbReference>
<dbReference type="Pfam" id="PF17759">
    <property type="entry name" value="tRNA_synthFbeta"/>
    <property type="match status" value="1"/>
</dbReference>
<dbReference type="SMART" id="SM00873">
    <property type="entry name" value="B3_4"/>
    <property type="match status" value="1"/>
</dbReference>
<dbReference type="SMART" id="SM00874">
    <property type="entry name" value="B5"/>
    <property type="match status" value="1"/>
</dbReference>
<dbReference type="SMART" id="SM00896">
    <property type="entry name" value="FDX-ACB"/>
    <property type="match status" value="1"/>
</dbReference>
<dbReference type="SUPFAM" id="SSF54991">
    <property type="entry name" value="Anticodon-binding domain of PheRS"/>
    <property type="match status" value="1"/>
</dbReference>
<dbReference type="SUPFAM" id="SSF55681">
    <property type="entry name" value="Class II aaRS and biotin synthetases"/>
    <property type="match status" value="1"/>
</dbReference>
<dbReference type="SUPFAM" id="SSF50249">
    <property type="entry name" value="Nucleic acid-binding proteins"/>
    <property type="match status" value="1"/>
</dbReference>
<dbReference type="SUPFAM" id="SSF56037">
    <property type="entry name" value="PheT/TilS domain"/>
    <property type="match status" value="1"/>
</dbReference>
<dbReference type="SUPFAM" id="SSF46955">
    <property type="entry name" value="Putative DNA-binding domain"/>
    <property type="match status" value="1"/>
</dbReference>
<dbReference type="PROSITE" id="PS51483">
    <property type="entry name" value="B5"/>
    <property type="match status" value="1"/>
</dbReference>
<dbReference type="PROSITE" id="PS51447">
    <property type="entry name" value="FDX_ACB"/>
    <property type="match status" value="1"/>
</dbReference>
<dbReference type="PROSITE" id="PS50886">
    <property type="entry name" value="TRBD"/>
    <property type="match status" value="1"/>
</dbReference>
<reference key="1">
    <citation type="journal article" date="2003" name="Genome Res.">
        <title>Comparative genome analysis of Vibrio vulnificus, a marine pathogen.</title>
        <authorList>
            <person name="Chen C.-Y."/>
            <person name="Wu K.-M."/>
            <person name="Chang Y.-C."/>
            <person name="Chang C.-H."/>
            <person name="Tsai H.-C."/>
            <person name="Liao T.-L."/>
            <person name="Liu Y.-M."/>
            <person name="Chen H.-J."/>
            <person name="Shen A.B.-T."/>
            <person name="Li J.-C."/>
            <person name="Su T.-L."/>
            <person name="Shao C.-P."/>
            <person name="Lee C.-T."/>
            <person name="Hor L.-I."/>
            <person name="Tsai S.-F."/>
        </authorList>
    </citation>
    <scope>NUCLEOTIDE SEQUENCE [LARGE SCALE GENOMIC DNA]</scope>
    <source>
        <strain>YJ016</strain>
    </source>
</reference>
<accession>Q7MK40</accession>
<organism>
    <name type="scientific">Vibrio vulnificus (strain YJ016)</name>
    <dbReference type="NCBI Taxonomy" id="196600"/>
    <lineage>
        <taxon>Bacteria</taxon>
        <taxon>Pseudomonadati</taxon>
        <taxon>Pseudomonadota</taxon>
        <taxon>Gammaproteobacteria</taxon>
        <taxon>Vibrionales</taxon>
        <taxon>Vibrionaceae</taxon>
        <taxon>Vibrio</taxon>
    </lineage>
</organism>
<evidence type="ECO:0000255" key="1">
    <source>
        <dbReference type="HAMAP-Rule" id="MF_00283"/>
    </source>
</evidence>
<comment type="catalytic activity">
    <reaction evidence="1">
        <text>tRNA(Phe) + L-phenylalanine + ATP = L-phenylalanyl-tRNA(Phe) + AMP + diphosphate + H(+)</text>
        <dbReference type="Rhea" id="RHEA:19413"/>
        <dbReference type="Rhea" id="RHEA-COMP:9668"/>
        <dbReference type="Rhea" id="RHEA-COMP:9699"/>
        <dbReference type="ChEBI" id="CHEBI:15378"/>
        <dbReference type="ChEBI" id="CHEBI:30616"/>
        <dbReference type="ChEBI" id="CHEBI:33019"/>
        <dbReference type="ChEBI" id="CHEBI:58095"/>
        <dbReference type="ChEBI" id="CHEBI:78442"/>
        <dbReference type="ChEBI" id="CHEBI:78531"/>
        <dbReference type="ChEBI" id="CHEBI:456215"/>
        <dbReference type="EC" id="6.1.1.20"/>
    </reaction>
</comment>
<comment type="cofactor">
    <cofactor evidence="1">
        <name>Mg(2+)</name>
        <dbReference type="ChEBI" id="CHEBI:18420"/>
    </cofactor>
    <text evidence="1">Binds 2 magnesium ions per tetramer.</text>
</comment>
<comment type="subunit">
    <text evidence="1">Tetramer of two alpha and two beta subunits.</text>
</comment>
<comment type="subcellular location">
    <subcellularLocation>
        <location evidence="1">Cytoplasm</location>
    </subcellularLocation>
</comment>
<comment type="similarity">
    <text evidence="1">Belongs to the phenylalanyl-tRNA synthetase beta subunit family. Type 1 subfamily.</text>
</comment>
<keyword id="KW-0030">Aminoacyl-tRNA synthetase</keyword>
<keyword id="KW-0067">ATP-binding</keyword>
<keyword id="KW-0963">Cytoplasm</keyword>
<keyword id="KW-0436">Ligase</keyword>
<keyword id="KW-0460">Magnesium</keyword>
<keyword id="KW-0479">Metal-binding</keyword>
<keyword id="KW-0547">Nucleotide-binding</keyword>
<keyword id="KW-0648">Protein biosynthesis</keyword>
<keyword id="KW-0694">RNA-binding</keyword>
<keyword id="KW-0820">tRNA-binding</keyword>
<name>SYFB_VIBVY</name>
<gene>
    <name evidence="1" type="primary">pheT</name>
    <name type="ordered locus">VV1970</name>
</gene>
<sequence length="795" mass="86340">MKFSESWLREWVNPAVTTDELTHQITMAGLEVDDVLPVAGTFNGVKVGHVVECGQHPDADKLRVTKVDVGEEELLDIVCGAANCRQGLKVAVATVGAVLPGDFKIKKAKLRGQPSHGMLCSFTELGIDVESDGIMELAIDAPIGMDFRDFLALNDVTVDVDLTSNRADCFSIRGMAREVGVLNRADVTEPSVAPVAPSIDDTVAIEVKAPAACPRYLGRVVKNVNVQAKTPLWMQEKLRRCGIRSIDPVVDITNFVLLEQGQPMHAFDLAKIDGGIVVRLAEQGEKITLLDGSEAELNADTLVVADHNKALAIAGIFGGEESGVTSETKDVLLECAFFAPDHIRGRARSYGLHTDSSMRFERGVDYALQVSAMERATALLVEICGGEVAPVVAVESEAELPKPNKVALRRTKLDNLLGHHIADSDVVEILERLGMTVETTAEGWVAVAPTWRFDIAIEQDLVEEVGRIYGYDNIPNQNPAAALKMHDHQEANIPLKRVRDLLVDRGYHEAITYSFVEPEQQKLVVPGVDALILPNPISAEMSAMRLGLIQGLLNTVVHNQKRQQPRVRLFEYGLRFIPCDTAENGMRQEPMLAGVIAGTRSEEHWNIDTNTVDFFDLKGDVEAILELSANDKAYSFVAAKHPALHPGQSAAIVVDGKEIGVIGTVHPELERKFGLNGRTIVFEIEWSAINRKVIPEAVALSKFPANRRDIAVVVDEAVASGDIVNACLEVGGEFLKAAKLFDVYVGKGVEEGKKSLAIALTLQSNERTLEDADIAGAVDAIVAHVSEKFGASLRD</sequence>
<proteinExistence type="inferred from homology"/>
<feature type="chain" id="PRO_0000126985" description="Phenylalanine--tRNA ligase beta subunit">
    <location>
        <begin position="1"/>
        <end position="795"/>
    </location>
</feature>
<feature type="domain" description="tRNA-binding" evidence="1">
    <location>
        <begin position="39"/>
        <end position="148"/>
    </location>
</feature>
<feature type="domain" description="B5" evidence="1">
    <location>
        <begin position="401"/>
        <end position="476"/>
    </location>
</feature>
<feature type="domain" description="FDX-ACB" evidence="1">
    <location>
        <begin position="701"/>
        <end position="794"/>
    </location>
</feature>
<feature type="binding site" evidence="1">
    <location>
        <position position="454"/>
    </location>
    <ligand>
        <name>Mg(2+)</name>
        <dbReference type="ChEBI" id="CHEBI:18420"/>
        <note>shared with alpha subunit</note>
    </ligand>
</feature>
<feature type="binding site" evidence="1">
    <location>
        <position position="460"/>
    </location>
    <ligand>
        <name>Mg(2+)</name>
        <dbReference type="ChEBI" id="CHEBI:18420"/>
        <note>shared with alpha subunit</note>
    </ligand>
</feature>
<feature type="binding site" evidence="1">
    <location>
        <position position="463"/>
    </location>
    <ligand>
        <name>Mg(2+)</name>
        <dbReference type="ChEBI" id="CHEBI:18420"/>
        <note>shared with alpha subunit</note>
    </ligand>
</feature>
<feature type="binding site" evidence="1">
    <location>
        <position position="464"/>
    </location>
    <ligand>
        <name>Mg(2+)</name>
        <dbReference type="ChEBI" id="CHEBI:18420"/>
        <note>shared with alpha subunit</note>
    </ligand>
</feature>